<comment type="function">
    <text evidence="1">Channel that opens in response to stretch forces in the membrane lipid bilayer. May participate in the regulation of osmotic pressure changes within the cell.</text>
</comment>
<comment type="subunit">
    <text evidence="1">Homopentamer.</text>
</comment>
<comment type="subcellular location">
    <subcellularLocation>
        <location evidence="1">Cell membrane</location>
        <topology evidence="1">Multi-pass membrane protein</topology>
    </subcellularLocation>
</comment>
<comment type="similarity">
    <text evidence="1">Belongs to the MscL family.</text>
</comment>
<keyword id="KW-1003">Cell membrane</keyword>
<keyword id="KW-0407">Ion channel</keyword>
<keyword id="KW-0406">Ion transport</keyword>
<keyword id="KW-0472">Membrane</keyword>
<keyword id="KW-1185">Reference proteome</keyword>
<keyword id="KW-0812">Transmembrane</keyword>
<keyword id="KW-1133">Transmembrane helix</keyword>
<keyword id="KW-0813">Transport</keyword>
<proteinExistence type="inferred from homology"/>
<name>MSCL_LISMO</name>
<reference key="1">
    <citation type="journal article" date="2001" name="Science">
        <title>Comparative genomics of Listeria species.</title>
        <authorList>
            <person name="Glaser P."/>
            <person name="Frangeul L."/>
            <person name="Buchrieser C."/>
            <person name="Rusniok C."/>
            <person name="Amend A."/>
            <person name="Baquero F."/>
            <person name="Berche P."/>
            <person name="Bloecker H."/>
            <person name="Brandt P."/>
            <person name="Chakraborty T."/>
            <person name="Charbit A."/>
            <person name="Chetouani F."/>
            <person name="Couve E."/>
            <person name="de Daruvar A."/>
            <person name="Dehoux P."/>
            <person name="Domann E."/>
            <person name="Dominguez-Bernal G."/>
            <person name="Duchaud E."/>
            <person name="Durant L."/>
            <person name="Dussurget O."/>
            <person name="Entian K.-D."/>
            <person name="Fsihi H."/>
            <person name="Garcia-del Portillo F."/>
            <person name="Garrido P."/>
            <person name="Gautier L."/>
            <person name="Goebel W."/>
            <person name="Gomez-Lopez N."/>
            <person name="Hain T."/>
            <person name="Hauf J."/>
            <person name="Jackson D."/>
            <person name="Jones L.-M."/>
            <person name="Kaerst U."/>
            <person name="Kreft J."/>
            <person name="Kuhn M."/>
            <person name="Kunst F."/>
            <person name="Kurapkat G."/>
            <person name="Madueno E."/>
            <person name="Maitournam A."/>
            <person name="Mata Vicente J."/>
            <person name="Ng E."/>
            <person name="Nedjari H."/>
            <person name="Nordsiek G."/>
            <person name="Novella S."/>
            <person name="de Pablos B."/>
            <person name="Perez-Diaz J.-C."/>
            <person name="Purcell R."/>
            <person name="Remmel B."/>
            <person name="Rose M."/>
            <person name="Schlueter T."/>
            <person name="Simoes N."/>
            <person name="Tierrez A."/>
            <person name="Vazquez-Boland J.-A."/>
            <person name="Voss H."/>
            <person name="Wehland J."/>
            <person name="Cossart P."/>
        </authorList>
    </citation>
    <scope>NUCLEOTIDE SEQUENCE [LARGE SCALE GENOMIC DNA]</scope>
    <source>
        <strain>ATCC BAA-679 / EGD-e</strain>
    </source>
</reference>
<dbReference type="EMBL" id="AL591982">
    <property type="protein sequence ID" value="CAD00142.1"/>
    <property type="molecule type" value="Genomic_DNA"/>
</dbReference>
<dbReference type="PIR" id="AH1332">
    <property type="entry name" value="AH1332"/>
</dbReference>
<dbReference type="RefSeq" id="NP_465588.1">
    <property type="nucleotide sequence ID" value="NC_003210.1"/>
</dbReference>
<dbReference type="RefSeq" id="WP_003728855.1">
    <property type="nucleotide sequence ID" value="NZ_CP149495.1"/>
</dbReference>
<dbReference type="SMR" id="Q8Y5J6"/>
<dbReference type="STRING" id="169963.gene:17594749"/>
<dbReference type="PaxDb" id="169963-lmo2064"/>
<dbReference type="EnsemblBacteria" id="CAD00142">
    <property type="protein sequence ID" value="CAD00142"/>
    <property type="gene ID" value="CAD00142"/>
</dbReference>
<dbReference type="GeneID" id="984800"/>
<dbReference type="KEGG" id="lmo:lmo2064"/>
<dbReference type="PATRIC" id="fig|169963.11.peg.2112"/>
<dbReference type="eggNOG" id="COG1970">
    <property type="taxonomic scope" value="Bacteria"/>
</dbReference>
<dbReference type="HOGENOM" id="CLU_095787_0_0_9"/>
<dbReference type="OrthoDB" id="9810350at2"/>
<dbReference type="PhylomeDB" id="Q8Y5J6"/>
<dbReference type="BioCyc" id="LMON169963:LMO2064-MONOMER"/>
<dbReference type="Proteomes" id="UP000000817">
    <property type="component" value="Chromosome"/>
</dbReference>
<dbReference type="GO" id="GO:0016020">
    <property type="term" value="C:membrane"/>
    <property type="evidence" value="ECO:0000318"/>
    <property type="project" value="GO_Central"/>
</dbReference>
<dbReference type="GO" id="GO:0005886">
    <property type="term" value="C:plasma membrane"/>
    <property type="evidence" value="ECO:0007669"/>
    <property type="project" value="UniProtKB-SubCell"/>
</dbReference>
<dbReference type="GO" id="GO:0008381">
    <property type="term" value="F:mechanosensitive monoatomic ion channel activity"/>
    <property type="evidence" value="ECO:0000318"/>
    <property type="project" value="GO_Central"/>
</dbReference>
<dbReference type="GO" id="GO:0006811">
    <property type="term" value="P:monoatomic ion transport"/>
    <property type="evidence" value="ECO:0000318"/>
    <property type="project" value="GO_Central"/>
</dbReference>
<dbReference type="FunFam" id="1.10.1200.120:FF:000003">
    <property type="entry name" value="Large-conductance mechanosensitive channel"/>
    <property type="match status" value="1"/>
</dbReference>
<dbReference type="Gene3D" id="1.10.1200.120">
    <property type="entry name" value="Large-conductance mechanosensitive channel, MscL, domain 1"/>
    <property type="match status" value="1"/>
</dbReference>
<dbReference type="HAMAP" id="MF_00115">
    <property type="entry name" value="MscL"/>
    <property type="match status" value="1"/>
</dbReference>
<dbReference type="InterPro" id="IPR019823">
    <property type="entry name" value="Mechanosensitive_channel_CS"/>
</dbReference>
<dbReference type="InterPro" id="IPR001185">
    <property type="entry name" value="MS_channel"/>
</dbReference>
<dbReference type="InterPro" id="IPR037673">
    <property type="entry name" value="MSC/AndL"/>
</dbReference>
<dbReference type="InterPro" id="IPR036019">
    <property type="entry name" value="MscL_channel"/>
</dbReference>
<dbReference type="NCBIfam" id="TIGR00220">
    <property type="entry name" value="mscL"/>
    <property type="match status" value="1"/>
</dbReference>
<dbReference type="NCBIfam" id="NF001843">
    <property type="entry name" value="PRK00567.1-4"/>
    <property type="match status" value="1"/>
</dbReference>
<dbReference type="NCBIfam" id="NF010558">
    <property type="entry name" value="PRK13953.1"/>
    <property type="match status" value="1"/>
</dbReference>
<dbReference type="PANTHER" id="PTHR30266:SF2">
    <property type="entry name" value="LARGE-CONDUCTANCE MECHANOSENSITIVE CHANNEL"/>
    <property type="match status" value="1"/>
</dbReference>
<dbReference type="PANTHER" id="PTHR30266">
    <property type="entry name" value="MECHANOSENSITIVE CHANNEL MSCL"/>
    <property type="match status" value="1"/>
</dbReference>
<dbReference type="Pfam" id="PF01741">
    <property type="entry name" value="MscL"/>
    <property type="match status" value="1"/>
</dbReference>
<dbReference type="PRINTS" id="PR01264">
    <property type="entry name" value="MECHCHANNEL"/>
</dbReference>
<dbReference type="SUPFAM" id="SSF81330">
    <property type="entry name" value="Gated mechanosensitive channel"/>
    <property type="match status" value="1"/>
</dbReference>
<dbReference type="PROSITE" id="PS01327">
    <property type="entry name" value="MSCL"/>
    <property type="match status" value="1"/>
</dbReference>
<protein>
    <recommendedName>
        <fullName evidence="1">Large-conductance mechanosensitive channel</fullName>
    </recommendedName>
</protein>
<sequence>MKKMLVEFRDFALKGNVLDLAVAVVIGAAFGKIVSSLVDNIIMPLVGVLLGGLDFTDLSFKVGKSVIQYGAFIQSIVDFIIIAFAIFIFVKVLTSFIKKKEQTVEETPVPPTEEYLKEIRDLLKEQQK</sequence>
<organism>
    <name type="scientific">Listeria monocytogenes serovar 1/2a (strain ATCC BAA-679 / EGD-e)</name>
    <dbReference type="NCBI Taxonomy" id="169963"/>
    <lineage>
        <taxon>Bacteria</taxon>
        <taxon>Bacillati</taxon>
        <taxon>Bacillota</taxon>
        <taxon>Bacilli</taxon>
        <taxon>Bacillales</taxon>
        <taxon>Listeriaceae</taxon>
        <taxon>Listeria</taxon>
    </lineage>
</organism>
<feature type="chain" id="PRO_0000192449" description="Large-conductance mechanosensitive channel">
    <location>
        <begin position="1"/>
        <end position="128"/>
    </location>
</feature>
<feature type="transmembrane region" description="Helical" evidence="1">
    <location>
        <begin position="11"/>
        <end position="31"/>
    </location>
</feature>
<feature type="transmembrane region" description="Helical" evidence="1">
    <location>
        <begin position="70"/>
        <end position="90"/>
    </location>
</feature>
<gene>
    <name evidence="1" type="primary">mscL</name>
    <name type="ordered locus">lmo2064</name>
</gene>
<evidence type="ECO:0000255" key="1">
    <source>
        <dbReference type="HAMAP-Rule" id="MF_00115"/>
    </source>
</evidence>
<accession>Q8Y5J6</accession>